<evidence type="ECO:0000255" key="1">
    <source>
        <dbReference type="HAMAP-Rule" id="MF_00632"/>
    </source>
</evidence>
<name>Y1664_CAMFF</name>
<sequence length="165" mass="18337">MADEHSFDISASVDIMEVKNALETAKKEVSSRFDFKGLKAQIELNEKEKTITLISSSDSKIDALKDIVLSKLIKREIPPVAITELKRESAGGANTKCSLKLNDTLDSLNAKKITKVIKDEKLKVNASIRGEEVRVTSKSIDELQNVIKLVKDLNLELPLSFKNLK</sequence>
<dbReference type="EMBL" id="CP000487">
    <property type="protein sequence ID" value="ABK83301.1"/>
    <property type="molecule type" value="Genomic_DNA"/>
</dbReference>
<dbReference type="RefSeq" id="WP_002850740.1">
    <property type="nucleotide sequence ID" value="NC_008599.1"/>
</dbReference>
<dbReference type="SMR" id="A0RRF8"/>
<dbReference type="KEGG" id="cff:CFF8240_1664"/>
<dbReference type="eggNOG" id="COG1666">
    <property type="taxonomic scope" value="Bacteria"/>
</dbReference>
<dbReference type="HOGENOM" id="CLU_099839_1_0_7"/>
<dbReference type="Proteomes" id="UP000000760">
    <property type="component" value="Chromosome"/>
</dbReference>
<dbReference type="GO" id="GO:0005829">
    <property type="term" value="C:cytosol"/>
    <property type="evidence" value="ECO:0007669"/>
    <property type="project" value="TreeGrafter"/>
</dbReference>
<dbReference type="GO" id="GO:0000166">
    <property type="term" value="F:nucleotide binding"/>
    <property type="evidence" value="ECO:0007669"/>
    <property type="project" value="TreeGrafter"/>
</dbReference>
<dbReference type="CDD" id="cd11740">
    <property type="entry name" value="YajQ_like"/>
    <property type="match status" value="1"/>
</dbReference>
<dbReference type="Gene3D" id="3.30.70.860">
    <property type="match status" value="1"/>
</dbReference>
<dbReference type="Gene3D" id="3.30.70.990">
    <property type="entry name" value="YajQ-like, domain 2"/>
    <property type="match status" value="1"/>
</dbReference>
<dbReference type="HAMAP" id="MF_00632">
    <property type="entry name" value="YajQ"/>
    <property type="match status" value="1"/>
</dbReference>
<dbReference type="InterPro" id="IPR007551">
    <property type="entry name" value="DUF520"/>
</dbReference>
<dbReference type="InterPro" id="IPR035571">
    <property type="entry name" value="UPF0234-like_C"/>
</dbReference>
<dbReference type="InterPro" id="IPR035570">
    <property type="entry name" value="UPF0234_N"/>
</dbReference>
<dbReference type="InterPro" id="IPR036183">
    <property type="entry name" value="YajQ-like_sf"/>
</dbReference>
<dbReference type="NCBIfam" id="NF003819">
    <property type="entry name" value="PRK05412.1"/>
    <property type="match status" value="1"/>
</dbReference>
<dbReference type="PANTHER" id="PTHR30476">
    <property type="entry name" value="UPF0234 PROTEIN YAJQ"/>
    <property type="match status" value="1"/>
</dbReference>
<dbReference type="PANTHER" id="PTHR30476:SF0">
    <property type="entry name" value="UPF0234 PROTEIN YAJQ"/>
    <property type="match status" value="1"/>
</dbReference>
<dbReference type="Pfam" id="PF04461">
    <property type="entry name" value="DUF520"/>
    <property type="match status" value="1"/>
</dbReference>
<dbReference type="SUPFAM" id="SSF89963">
    <property type="entry name" value="YajQ-like"/>
    <property type="match status" value="2"/>
</dbReference>
<accession>A0RRF8</accession>
<protein>
    <recommendedName>
        <fullName evidence="1">Nucleotide-binding protein CFF8240_1664</fullName>
    </recommendedName>
</protein>
<proteinExistence type="inferred from homology"/>
<organism>
    <name type="scientific">Campylobacter fetus subsp. fetus (strain 82-40)</name>
    <dbReference type="NCBI Taxonomy" id="360106"/>
    <lineage>
        <taxon>Bacteria</taxon>
        <taxon>Pseudomonadati</taxon>
        <taxon>Campylobacterota</taxon>
        <taxon>Epsilonproteobacteria</taxon>
        <taxon>Campylobacterales</taxon>
        <taxon>Campylobacteraceae</taxon>
        <taxon>Campylobacter</taxon>
    </lineage>
</organism>
<gene>
    <name type="ordered locus">CFF8240_1664</name>
</gene>
<reference key="1">
    <citation type="submission" date="2006-11" db="EMBL/GenBank/DDBJ databases">
        <title>Sequence of Campylobacter fetus subsp. fetus 82-40.</title>
        <authorList>
            <person name="Fouts D.E."/>
            <person name="Nelson K.E."/>
        </authorList>
    </citation>
    <scope>NUCLEOTIDE SEQUENCE [LARGE SCALE GENOMIC DNA]</scope>
    <source>
        <strain>82-40</strain>
    </source>
</reference>
<comment type="function">
    <text evidence="1">Nucleotide-binding protein.</text>
</comment>
<comment type="similarity">
    <text evidence="1">Belongs to the YajQ family.</text>
</comment>
<feature type="chain" id="PRO_1000147286" description="Nucleotide-binding protein CFF8240_1664">
    <location>
        <begin position="1"/>
        <end position="165"/>
    </location>
</feature>
<keyword id="KW-0547">Nucleotide-binding</keyword>